<comment type="function">
    <text evidence="1">Murein-degrading enzyme. May play a role in recycling of muropeptides during cell elongation and/or cell division.</text>
</comment>
<comment type="catalytic activity">
    <reaction evidence="1">
        <text>Exolytic cleavage of the (1-&gt;4)-beta-glycosidic linkage between N-acetylmuramic acid (MurNAc) and N-acetylglucosamine (GlcNAc) residues in peptidoglycan, from either the reducing or the non-reducing ends of the peptidoglycan chains, with concomitant formation of a 1,6-anhydrobond in the MurNAc residue.</text>
        <dbReference type="EC" id="4.2.2.n1"/>
    </reaction>
</comment>
<comment type="subcellular location">
    <subcellularLocation>
        <location evidence="1">Cell outer membrane</location>
        <topology evidence="1">Lipid-anchor</topology>
    </subcellularLocation>
</comment>
<comment type="similarity">
    <text evidence="1">Belongs to the transglycosylase Slt family.</text>
</comment>
<comment type="sequence caution" evidence="2">
    <conflict type="erroneous initiation">
        <sequence resource="EMBL-CDS" id="AAV78813"/>
    </conflict>
</comment>
<gene>
    <name evidence="1" type="primary">mltC</name>
    <name type="ordered locus">SPA2975</name>
</gene>
<sequence>MKKLLALAVIAPLLISCSSSTKKGETYNEAWVKDTNGFDILMGQFANNIENLWGYKEVLIAGPKDYVKYTDQFQTRSHINFDDGTITVETIAGTEPTAHLRRAIIKTLLMGDDPTSVDLYSDVDDIKISKEPFLYGQVLDNTGQPIRWEGRATTFADYLLKTRLKSRSNGLRIIYSVTINLVPNHLDKRAHKYIGMVRQASRKYGVDESLILAIMQTESSFNPYAVSHADALGLMQVVQHSAGKDVFRSQGKSGTPSRNFLFDPASNIDTGTAYLAMLNNVYLSGIENPTSRRYAVITAYNGGAGSVLRVFSNDKIQAANMINRMSPGDVYQILTTRHPSAESRRYLYKVNSAQRSYRRR</sequence>
<evidence type="ECO:0000255" key="1">
    <source>
        <dbReference type="HAMAP-Rule" id="MF_01616"/>
    </source>
</evidence>
<evidence type="ECO:0000305" key="2"/>
<protein>
    <recommendedName>
        <fullName evidence="1">Membrane-bound lytic murein transglycosylase C</fullName>
        <ecNumber evidence="1">4.2.2.n1</ecNumber>
    </recommendedName>
    <alternativeName>
        <fullName evidence="1">Murein lyase C</fullName>
    </alternativeName>
</protein>
<dbReference type="EC" id="4.2.2.n1" evidence="1"/>
<dbReference type="EMBL" id="CP000026">
    <property type="protein sequence ID" value="AAV78813.1"/>
    <property type="status" value="ALT_INIT"/>
    <property type="molecule type" value="Genomic_DNA"/>
</dbReference>
<dbReference type="SMR" id="Q5PMM0"/>
<dbReference type="CAZy" id="GH23">
    <property type="family name" value="Glycoside Hydrolase Family 23"/>
</dbReference>
<dbReference type="KEGG" id="spt:SPA2975"/>
<dbReference type="HOGENOM" id="CLU_044583_0_0_6"/>
<dbReference type="Proteomes" id="UP000008185">
    <property type="component" value="Chromosome"/>
</dbReference>
<dbReference type="GO" id="GO:0009279">
    <property type="term" value="C:cell outer membrane"/>
    <property type="evidence" value="ECO:0007669"/>
    <property type="project" value="UniProtKB-SubCell"/>
</dbReference>
<dbReference type="GO" id="GO:0016798">
    <property type="term" value="F:hydrolase activity, acting on glycosyl bonds"/>
    <property type="evidence" value="ECO:0007669"/>
    <property type="project" value="InterPro"/>
</dbReference>
<dbReference type="GO" id="GO:0008933">
    <property type="term" value="F:peptidoglycan lytic transglycosylase activity"/>
    <property type="evidence" value="ECO:0007669"/>
    <property type="project" value="UniProtKB-UniRule"/>
</dbReference>
<dbReference type="GO" id="GO:0016998">
    <property type="term" value="P:cell wall macromolecule catabolic process"/>
    <property type="evidence" value="ECO:0007669"/>
    <property type="project" value="UniProtKB-UniRule"/>
</dbReference>
<dbReference type="GO" id="GO:0071555">
    <property type="term" value="P:cell wall organization"/>
    <property type="evidence" value="ECO:0007669"/>
    <property type="project" value="UniProtKB-KW"/>
</dbReference>
<dbReference type="GO" id="GO:0000270">
    <property type="term" value="P:peptidoglycan metabolic process"/>
    <property type="evidence" value="ECO:0007669"/>
    <property type="project" value="InterPro"/>
</dbReference>
<dbReference type="CDD" id="cd16893">
    <property type="entry name" value="LT_MltC_MltE"/>
    <property type="match status" value="1"/>
</dbReference>
<dbReference type="FunFam" id="1.10.530.10:FF:000002">
    <property type="entry name" value="Membrane-bound lytic murein transglycosylase C"/>
    <property type="match status" value="1"/>
</dbReference>
<dbReference type="Gene3D" id="1.10.530.10">
    <property type="match status" value="1"/>
</dbReference>
<dbReference type="HAMAP" id="MF_01616">
    <property type="entry name" value="MltC"/>
    <property type="match status" value="1"/>
</dbReference>
<dbReference type="InterPro" id="IPR023346">
    <property type="entry name" value="Lysozyme-like_dom_sf"/>
</dbReference>
<dbReference type="InterPro" id="IPR023664">
    <property type="entry name" value="Murein_transglycosylaseC"/>
</dbReference>
<dbReference type="InterPro" id="IPR024570">
    <property type="entry name" value="Murein_transglycosylaseC_N"/>
</dbReference>
<dbReference type="InterPro" id="IPR000189">
    <property type="entry name" value="Transglyc_AS"/>
</dbReference>
<dbReference type="InterPro" id="IPR008258">
    <property type="entry name" value="Transglycosylase_SLT_dom_1"/>
</dbReference>
<dbReference type="NCBIfam" id="NF008670">
    <property type="entry name" value="PRK11671.1"/>
    <property type="match status" value="1"/>
</dbReference>
<dbReference type="PANTHER" id="PTHR37423:SF2">
    <property type="entry name" value="MEMBRANE-BOUND LYTIC MUREIN TRANSGLYCOSYLASE C"/>
    <property type="match status" value="1"/>
</dbReference>
<dbReference type="PANTHER" id="PTHR37423">
    <property type="entry name" value="SOLUBLE LYTIC MUREIN TRANSGLYCOSYLASE-RELATED"/>
    <property type="match status" value="1"/>
</dbReference>
<dbReference type="Pfam" id="PF11873">
    <property type="entry name" value="Mltc_N"/>
    <property type="match status" value="1"/>
</dbReference>
<dbReference type="Pfam" id="PF01464">
    <property type="entry name" value="SLT"/>
    <property type="match status" value="1"/>
</dbReference>
<dbReference type="SUPFAM" id="SSF53955">
    <property type="entry name" value="Lysozyme-like"/>
    <property type="match status" value="1"/>
</dbReference>
<dbReference type="PROSITE" id="PS51257">
    <property type="entry name" value="PROKAR_LIPOPROTEIN"/>
    <property type="match status" value="1"/>
</dbReference>
<dbReference type="PROSITE" id="PS00922">
    <property type="entry name" value="TRANSGLYCOSYLASE"/>
    <property type="match status" value="1"/>
</dbReference>
<keyword id="KW-0998">Cell outer membrane</keyword>
<keyword id="KW-0961">Cell wall biogenesis/degradation</keyword>
<keyword id="KW-0449">Lipoprotein</keyword>
<keyword id="KW-0456">Lyase</keyword>
<keyword id="KW-0472">Membrane</keyword>
<keyword id="KW-0564">Palmitate</keyword>
<keyword id="KW-0732">Signal</keyword>
<feature type="signal peptide" evidence="1">
    <location>
        <begin position="1"/>
        <end position="16"/>
    </location>
</feature>
<feature type="chain" id="PRO_0000032795" description="Membrane-bound lytic murein transglycosylase C">
    <location>
        <begin position="17"/>
        <end position="360"/>
    </location>
</feature>
<feature type="lipid moiety-binding region" description="N-palmitoyl cysteine" evidence="1">
    <location>
        <position position="17"/>
    </location>
</feature>
<feature type="lipid moiety-binding region" description="S-diacylglycerol cysteine" evidence="1">
    <location>
        <position position="17"/>
    </location>
</feature>
<accession>Q5PMM0</accession>
<reference key="1">
    <citation type="journal article" date="2004" name="Nat. Genet.">
        <title>Comparison of genome degradation in Paratyphi A and Typhi, human-restricted serovars of Salmonella enterica that cause typhoid.</title>
        <authorList>
            <person name="McClelland M."/>
            <person name="Sanderson K.E."/>
            <person name="Clifton S.W."/>
            <person name="Latreille P."/>
            <person name="Porwollik S."/>
            <person name="Sabo A."/>
            <person name="Meyer R."/>
            <person name="Bieri T."/>
            <person name="Ozersky P."/>
            <person name="McLellan M."/>
            <person name="Harkins C.R."/>
            <person name="Wang C."/>
            <person name="Nguyen C."/>
            <person name="Berghoff A."/>
            <person name="Elliott G."/>
            <person name="Kohlberg S."/>
            <person name="Strong C."/>
            <person name="Du F."/>
            <person name="Carter J."/>
            <person name="Kremizki C."/>
            <person name="Layman D."/>
            <person name="Leonard S."/>
            <person name="Sun H."/>
            <person name="Fulton L."/>
            <person name="Nash W."/>
            <person name="Miner T."/>
            <person name="Minx P."/>
            <person name="Delehaunty K."/>
            <person name="Fronick C."/>
            <person name="Magrini V."/>
            <person name="Nhan M."/>
            <person name="Warren W."/>
            <person name="Florea L."/>
            <person name="Spieth J."/>
            <person name="Wilson R.K."/>
        </authorList>
    </citation>
    <scope>NUCLEOTIDE SEQUENCE [LARGE SCALE GENOMIC DNA]</scope>
    <source>
        <strain>ATCC 9150 / SARB42</strain>
    </source>
</reference>
<organism>
    <name type="scientific">Salmonella paratyphi A (strain ATCC 9150 / SARB42)</name>
    <dbReference type="NCBI Taxonomy" id="295319"/>
    <lineage>
        <taxon>Bacteria</taxon>
        <taxon>Pseudomonadati</taxon>
        <taxon>Pseudomonadota</taxon>
        <taxon>Gammaproteobacteria</taxon>
        <taxon>Enterobacterales</taxon>
        <taxon>Enterobacteriaceae</taxon>
        <taxon>Salmonella</taxon>
    </lineage>
</organism>
<proteinExistence type="inferred from homology"/>
<name>MLTC_SALPA</name>